<name>Y448_MYCPN</name>
<keyword id="KW-1185">Reference proteome</keyword>
<accession>Q50364</accession>
<accession>P75332</accession>
<gene>
    <name type="ordered locus">MPN_448</name>
    <name type="ORF">H08_orf263</name>
    <name type="ORF">MP393</name>
</gene>
<protein>
    <recommendedName>
        <fullName>Uncharacterized protein MG313 homolog</fullName>
    </recommendedName>
</protein>
<feature type="chain" id="PRO_0000210527" description="Uncharacterized protein MG313 homolog">
    <location>
        <begin position="1"/>
        <end position="285"/>
    </location>
</feature>
<proteinExistence type="predicted"/>
<reference key="1">
    <citation type="journal article" date="1996" name="Gene">
        <title>Sequence analysis and characterization of the hmw gene cluster of Mycoplasma pneumoniae.</title>
        <authorList>
            <person name="Dirksen L.B."/>
            <person name="Proft T."/>
            <person name="Hilbert H."/>
            <person name="Plagens H."/>
            <person name="Herrmann R."/>
            <person name="Krause D.C."/>
        </authorList>
    </citation>
    <scope>NUCLEOTIDE SEQUENCE [GENOMIC DNA]</scope>
    <source>
        <strain>ATCC 29342 / M129 / Subtype 1</strain>
    </source>
</reference>
<reference key="2">
    <citation type="journal article" date="1996" name="Nucleic Acids Res.">
        <title>Complete sequence analysis of the genome of the bacterium Mycoplasma pneumoniae.</title>
        <authorList>
            <person name="Himmelreich R."/>
            <person name="Hilbert H."/>
            <person name="Plagens H."/>
            <person name="Pirkl E."/>
            <person name="Li B.-C."/>
            <person name="Herrmann R."/>
        </authorList>
    </citation>
    <scope>NUCLEOTIDE SEQUENCE [LARGE SCALE GENOMIC DNA]</scope>
    <source>
        <strain>ATCC 29342 / M129 / Subtype 1</strain>
    </source>
</reference>
<organism>
    <name type="scientific">Mycoplasma pneumoniae (strain ATCC 29342 / M129 / Subtype 1)</name>
    <name type="common">Mycoplasmoides pneumoniae</name>
    <dbReference type="NCBI Taxonomy" id="272634"/>
    <lineage>
        <taxon>Bacteria</taxon>
        <taxon>Bacillati</taxon>
        <taxon>Mycoplasmatota</taxon>
        <taxon>Mycoplasmoidales</taxon>
        <taxon>Mycoplasmoidaceae</taxon>
        <taxon>Mycoplasmoides</taxon>
    </lineage>
</organism>
<dbReference type="EMBL" id="L38997">
    <property type="protein sequence ID" value="AAA61696.1"/>
    <property type="molecule type" value="Genomic_DNA"/>
</dbReference>
<dbReference type="EMBL" id="U00089">
    <property type="protein sequence ID" value="AAG34746.1"/>
    <property type="molecule type" value="Genomic_DNA"/>
</dbReference>
<dbReference type="PIR" id="S73719">
    <property type="entry name" value="S73719"/>
</dbReference>
<dbReference type="RefSeq" id="NP_110136.1">
    <property type="nucleotide sequence ID" value="NC_000912.1"/>
</dbReference>
<dbReference type="RefSeq" id="WP_010874804.1">
    <property type="nucleotide sequence ID" value="NZ_OU342337.1"/>
</dbReference>
<dbReference type="STRING" id="272634.MPN_448"/>
<dbReference type="EnsemblBacteria" id="AAG34746">
    <property type="protein sequence ID" value="AAG34746"/>
    <property type="gene ID" value="MPN_448"/>
</dbReference>
<dbReference type="KEGG" id="mpn:MPN_448"/>
<dbReference type="PATRIC" id="fig|272634.6.peg.484"/>
<dbReference type="HOGENOM" id="CLU_917724_0_0_14"/>
<dbReference type="OrthoDB" id="399355at2"/>
<dbReference type="BioCyc" id="MPNE272634:G1GJ3-725-MONOMER"/>
<dbReference type="Proteomes" id="UP000000808">
    <property type="component" value="Chromosome"/>
</dbReference>
<dbReference type="GO" id="GO:0022857">
    <property type="term" value="F:transmembrane transporter activity"/>
    <property type="evidence" value="ECO:0007669"/>
    <property type="project" value="InterPro"/>
</dbReference>
<dbReference type="Gene3D" id="1.10.1760.20">
    <property type="match status" value="1"/>
</dbReference>
<dbReference type="InterPro" id="IPR024529">
    <property type="entry name" value="ECF_trnsprt_substrate-spec"/>
</dbReference>
<dbReference type="Pfam" id="PF12822">
    <property type="entry name" value="ECF_trnsprt"/>
    <property type="match status" value="1"/>
</dbReference>
<sequence length="285" mass="32944">MFPYYPLKVTRNLQLLVWAAVLMALSFIFNIFSINVTSVLKVSFTRIPFALIGWMFGPVWGFTFGAIADTMDWLTRGYTWFWLFAIQKPMFCFLAGLVKGVYQVRQSSTNWKIDFWILQSILIGFFVLTLVLLLMYLTDGNFQAAGNQSFGRGFDVNVHILQGITMAAFISFFVGLEIFLGWKYTKVKKPKEMILNLYILMMALLMTLVVSLLIGTVASIEYLVFLSGKPSKNFVKYGSYFFLMPRVLVQALLMPLYLALFKPLIRIAENNLRNYLRVYNLSWKR</sequence>